<dbReference type="EMBL" id="Z71262">
    <property type="protein sequence ID" value="CAA95810.1"/>
    <property type="molecule type" value="Genomic_DNA"/>
</dbReference>
<dbReference type="PIR" id="T21255">
    <property type="entry name" value="T21255"/>
</dbReference>
<dbReference type="RefSeq" id="NP_492007.1">
    <property type="nucleotide sequence ID" value="NM_059606.10"/>
</dbReference>
<dbReference type="SMR" id="Q19724"/>
<dbReference type="BioGRID" id="49611">
    <property type="interactions" value="51"/>
</dbReference>
<dbReference type="FunCoup" id="Q19724">
    <property type="interactions" value="1518"/>
</dbReference>
<dbReference type="IntAct" id="Q19724">
    <property type="interactions" value="1"/>
</dbReference>
<dbReference type="STRING" id="6239.F22D6.4.2"/>
<dbReference type="PaxDb" id="6239-F22D6.4.2"/>
<dbReference type="PeptideAtlas" id="Q19724"/>
<dbReference type="EnsemblMetazoa" id="F22D6.4.1">
    <property type="protein sequence ID" value="F22D6.4.1"/>
    <property type="gene ID" value="WBGene00009051"/>
</dbReference>
<dbReference type="GeneID" id="184827"/>
<dbReference type="KEGG" id="cel:CELE_F22D6.4"/>
<dbReference type="AGR" id="WB:WBGene00009051"/>
<dbReference type="CTD" id="184827"/>
<dbReference type="WormBase" id="F22D6.4">
    <property type="protein sequence ID" value="CE05685"/>
    <property type="gene ID" value="WBGene00009051"/>
    <property type="gene designation" value="nduf-6"/>
</dbReference>
<dbReference type="eggNOG" id="KOG3456">
    <property type="taxonomic scope" value="Eukaryota"/>
</dbReference>
<dbReference type="GeneTree" id="ENSGT00390000015775"/>
<dbReference type="HOGENOM" id="CLU_083053_3_0_1"/>
<dbReference type="InParanoid" id="Q19724"/>
<dbReference type="OMA" id="GQAWDQA"/>
<dbReference type="OrthoDB" id="307899at2759"/>
<dbReference type="PhylomeDB" id="Q19724"/>
<dbReference type="SignaLink" id="Q19724"/>
<dbReference type="PRO" id="PR:Q19724"/>
<dbReference type="Proteomes" id="UP000001940">
    <property type="component" value="Chromosome I"/>
</dbReference>
<dbReference type="Bgee" id="WBGene00009051">
    <property type="expression patterns" value="Expressed in material anatomical entity and 5 other cell types or tissues"/>
</dbReference>
<dbReference type="GO" id="GO:0005743">
    <property type="term" value="C:mitochondrial inner membrane"/>
    <property type="evidence" value="ECO:0007669"/>
    <property type="project" value="UniProtKB-SubCell"/>
</dbReference>
<dbReference type="GO" id="GO:0005739">
    <property type="term" value="C:mitochondrion"/>
    <property type="evidence" value="ECO:0007005"/>
    <property type="project" value="WormBase"/>
</dbReference>
<dbReference type="GO" id="GO:0045271">
    <property type="term" value="C:respiratory chain complex I"/>
    <property type="evidence" value="ECO:0000318"/>
    <property type="project" value="GO_Central"/>
</dbReference>
<dbReference type="GO" id="GO:0006120">
    <property type="term" value="P:mitochondrial electron transport, NADH to ubiquinone"/>
    <property type="evidence" value="ECO:0000315"/>
    <property type="project" value="WormBase"/>
</dbReference>
<dbReference type="GO" id="GO:0009410">
    <property type="term" value="P:response to xenobiotic stimulus"/>
    <property type="evidence" value="ECO:0000315"/>
    <property type="project" value="WormBase"/>
</dbReference>
<dbReference type="FunFam" id="2.60.260.40:FF:000003">
    <property type="entry name" value="NADH dehydrogenase [ubiquinone] iron-sulfur protein 6, mitochondrial"/>
    <property type="match status" value="1"/>
</dbReference>
<dbReference type="Gene3D" id="2.60.260.40">
    <property type="entry name" value="q5lls5 like domains"/>
    <property type="match status" value="1"/>
</dbReference>
<dbReference type="InterPro" id="IPR016668">
    <property type="entry name" value="NDUFS6"/>
</dbReference>
<dbReference type="InterPro" id="IPR019401">
    <property type="entry name" value="Znf_CHCC"/>
</dbReference>
<dbReference type="PANTHER" id="PTHR13156:SF0">
    <property type="entry name" value="NADH DEHYDROGENASE [UBIQUINONE] IRON-SULFUR PROTEIN 6, MITOCHONDRIAL"/>
    <property type="match status" value="1"/>
</dbReference>
<dbReference type="PANTHER" id="PTHR13156">
    <property type="entry name" value="NADH-UBIQUINONE OXIDOREDUCTASE 13 KD-A SUBUNIT"/>
    <property type="match status" value="1"/>
</dbReference>
<dbReference type="Pfam" id="PF10276">
    <property type="entry name" value="zf-CHCC"/>
    <property type="match status" value="1"/>
</dbReference>
<dbReference type="PIRSF" id="PIRSF016564">
    <property type="entry name" value="CI-13KD-A"/>
    <property type="match status" value="1"/>
</dbReference>
<gene>
    <name type="primary">nduf-6</name>
    <name type="ORF">F22D6.4</name>
</gene>
<accession>Q19724</accession>
<proteinExistence type="inferred from homology"/>
<comment type="function">
    <text evidence="1">Accessory subunit of the mitochondrial membrane respiratory chain NADH dehydrogenase (Complex I), that is believed not to be involved in catalysis. Complex I functions in the transfer of electrons from NADH to the respiratory chain. The immediate electron acceptor for the enzyme is believed to be ubiquinone (By similarity).</text>
</comment>
<comment type="subunit">
    <text evidence="1">Complex I is composed of 45 different subunits. This is a component of the iron-sulfur (IP) fragment of the enzyme (By similarity).</text>
</comment>
<comment type="subcellular location">
    <subcellularLocation>
        <location evidence="1">Mitochondrion inner membrane</location>
        <topology evidence="1">Peripheral membrane protein</topology>
        <orientation evidence="1">Matrix side</orientation>
    </subcellularLocation>
</comment>
<comment type="similarity">
    <text evidence="3">Belongs to the complex I NDUFS6 subunit family.</text>
</comment>
<evidence type="ECO:0000250" key="1"/>
<evidence type="ECO:0000255" key="2"/>
<evidence type="ECO:0000305" key="3"/>
<feature type="transit peptide" description="Mitochondrion" evidence="2">
    <location>
        <begin position="1"/>
        <end status="unknown"/>
    </location>
</feature>
<feature type="chain" id="PRO_0000020022" description="Probable NADH dehydrogenase [ubiquinone] iron-sulfur protein 6, mitochondrial">
    <location>
        <begin status="unknown"/>
        <end position="140"/>
    </location>
</feature>
<reference key="1">
    <citation type="journal article" date="1998" name="Science">
        <title>Genome sequence of the nematode C. elegans: a platform for investigating biology.</title>
        <authorList>
            <consortium name="The C. elegans sequencing consortium"/>
        </authorList>
    </citation>
    <scope>NUCLEOTIDE SEQUENCE [LARGE SCALE GENOMIC DNA]</scope>
    <source>
        <strain>Bristol N2</strain>
    </source>
</reference>
<name>NDUS6_CAEEL</name>
<protein>
    <recommendedName>
        <fullName>Probable NADH dehydrogenase [ubiquinone] iron-sulfur protein 6, mitochondrial</fullName>
    </recommendedName>
    <alternativeName>
        <fullName>Complex I-13kD-A</fullName>
        <shortName>CI-13kD-A</shortName>
    </alternativeName>
    <alternativeName>
        <fullName>NADH-ubiquinone oxidoreductase 13 kDa-A subunit</fullName>
    </alternativeName>
</protein>
<keyword id="KW-0249">Electron transport</keyword>
<keyword id="KW-0472">Membrane</keyword>
<keyword id="KW-0496">Mitochondrion</keyword>
<keyword id="KW-0999">Mitochondrion inner membrane</keyword>
<keyword id="KW-1185">Reference proteome</keyword>
<keyword id="KW-0679">Respiratory chain</keyword>
<keyword id="KW-0809">Transit peptide</keyword>
<keyword id="KW-0813">Transport</keyword>
<sequence length="140" mass="15656">MNRLLQQSVSRGPLAVRASSTITTKPPTPNQITKNNAQFDKVTHTGQAWDQSDYRLQRFDISKKSVNPNVAMHLIDQRPPEDCGDKRVVFCDGGHPALGHPKVYINLDKPGVHACGYCGNRFYNSHATKAEDMKIQHLNC</sequence>
<organism>
    <name type="scientific">Caenorhabditis elegans</name>
    <dbReference type="NCBI Taxonomy" id="6239"/>
    <lineage>
        <taxon>Eukaryota</taxon>
        <taxon>Metazoa</taxon>
        <taxon>Ecdysozoa</taxon>
        <taxon>Nematoda</taxon>
        <taxon>Chromadorea</taxon>
        <taxon>Rhabditida</taxon>
        <taxon>Rhabditina</taxon>
        <taxon>Rhabditomorpha</taxon>
        <taxon>Rhabditoidea</taxon>
        <taxon>Rhabditidae</taxon>
        <taxon>Peloderinae</taxon>
        <taxon>Caenorhabditis</taxon>
    </lineage>
</organism>